<organism>
    <name type="scientific">Caenorhabditis elegans</name>
    <dbReference type="NCBI Taxonomy" id="6239"/>
    <lineage>
        <taxon>Eukaryota</taxon>
        <taxon>Metazoa</taxon>
        <taxon>Ecdysozoa</taxon>
        <taxon>Nematoda</taxon>
        <taxon>Chromadorea</taxon>
        <taxon>Rhabditida</taxon>
        <taxon>Rhabditina</taxon>
        <taxon>Rhabditomorpha</taxon>
        <taxon>Rhabditoidea</taxon>
        <taxon>Rhabditidae</taxon>
        <taxon>Peloderinae</taxon>
        <taxon>Caenorhabditis</taxon>
    </lineage>
</organism>
<name>DNJ10_CAEEL</name>
<sequence>MFVLNRSSGLIHRSVPLLAQVSTPTTSTTKLAQLHTTHALSKEDYYKTLGVDKKSDAKAIKKAYFQLAKKYHPDVNKTKEAQTKFQEISEAYEVLSDDTKRQEYDAYGSGGGPAGGRGGAGGFHHHGNVDVNEIFRRAFGGGGGMGGFNFDNFAQSAFGHSAAQEMVMDISFEEAVRGATKNVSVNVVEDCLKCHGTQVEPGHKKTSCPYCNGTGAVSQRLQGGFFYQTTCNRCRGSGHYNKNPCQECEGEGQTVQRRQVSFNVPAGTNNGDSLKFQVGKNQLFVRFNVAPSLKFRREKDDIHCDVDISLAQAVLGGTVKVPGINGDTYVHIPAGTGSHTKMRLTGKGVKRLHSYGNGDQYMHIKVTVPKYLTAEQKQIMLAWAATEQLKDGTIKGLEKNQKTEEKETKKNEEKKSEGASESQKRRSEPVAENAETIDENQENEGFFEKIKRKIFG</sequence>
<reference key="1">
    <citation type="journal article" date="1998" name="Science">
        <title>Genome sequence of the nematode C. elegans: a platform for investigating biology.</title>
        <authorList>
            <consortium name="The C. elegans sequencing consortium"/>
        </authorList>
    </citation>
    <scope>NUCLEOTIDE SEQUENCE [LARGE SCALE GENOMIC DNA]</scope>
    <scope>ALTERNATIVE SPLICING</scope>
    <source>
        <strain>Bristol N2</strain>
    </source>
</reference>
<keyword id="KW-0025">Alternative splicing</keyword>
<keyword id="KW-0143">Chaperone</keyword>
<keyword id="KW-0479">Metal-binding</keyword>
<keyword id="KW-1185">Reference proteome</keyword>
<keyword id="KW-0677">Repeat</keyword>
<keyword id="KW-0862">Zinc</keyword>
<keyword id="KW-0863">Zinc-finger</keyword>
<dbReference type="EMBL" id="FO080222">
    <property type="protein sequence ID" value="CCD62135.1"/>
    <property type="molecule type" value="Genomic_DNA"/>
</dbReference>
<dbReference type="EMBL" id="FO080222">
    <property type="protein sequence ID" value="CCD62136.1"/>
    <property type="molecule type" value="Genomic_DNA"/>
</dbReference>
<dbReference type="RefSeq" id="NP_498901.1">
    <molecule id="Q8TA83-2"/>
    <property type="nucleotide sequence ID" value="NM_066500.7"/>
</dbReference>
<dbReference type="RefSeq" id="NP_498902.1">
    <molecule id="Q8TA83-1"/>
    <property type="nucleotide sequence ID" value="NM_066501.4"/>
</dbReference>
<dbReference type="SMR" id="Q8TA83"/>
<dbReference type="BioGRID" id="41415">
    <property type="interactions" value="23"/>
</dbReference>
<dbReference type="DIP" id="DIP-24664N"/>
<dbReference type="FunCoup" id="Q8TA83">
    <property type="interactions" value="2763"/>
</dbReference>
<dbReference type="IntAct" id="Q8TA83">
    <property type="interactions" value="12"/>
</dbReference>
<dbReference type="STRING" id="6239.F22B7.5a.1"/>
<dbReference type="PaxDb" id="6239-F22B7.5a"/>
<dbReference type="PeptideAtlas" id="Q8TA83"/>
<dbReference type="EnsemblMetazoa" id="F22B7.5a.1">
    <molecule id="Q8TA83-1"/>
    <property type="protein sequence ID" value="F22B7.5a.1"/>
    <property type="gene ID" value="WBGene00001028"/>
</dbReference>
<dbReference type="EnsemblMetazoa" id="F22B7.5b.1">
    <molecule id="Q8TA83-2"/>
    <property type="protein sequence ID" value="F22B7.5b.1"/>
    <property type="gene ID" value="WBGene00001028"/>
</dbReference>
<dbReference type="GeneID" id="176211"/>
<dbReference type="KEGG" id="cel:CELE_F22B7.5"/>
<dbReference type="UCSC" id="F22B7.5a.1">
    <molecule id="Q8TA83-1"/>
    <property type="organism name" value="c. elegans"/>
</dbReference>
<dbReference type="AGR" id="WB:WBGene00001028"/>
<dbReference type="CTD" id="176211"/>
<dbReference type="WormBase" id="F22B7.5a">
    <molecule id="Q8TA83-1"/>
    <property type="protein sequence ID" value="CE24911"/>
    <property type="gene ID" value="WBGene00001028"/>
    <property type="gene designation" value="dnj-10"/>
</dbReference>
<dbReference type="WormBase" id="F22B7.5b">
    <molecule id="Q8TA83-2"/>
    <property type="protein sequence ID" value="CE27991"/>
    <property type="gene ID" value="WBGene00001028"/>
    <property type="gene designation" value="dnj-10"/>
</dbReference>
<dbReference type="eggNOG" id="KOG0715">
    <property type="taxonomic scope" value="Eukaryota"/>
</dbReference>
<dbReference type="GeneTree" id="ENSGT00940000155280"/>
<dbReference type="HOGENOM" id="CLU_017633_0_5_1"/>
<dbReference type="InParanoid" id="Q8TA83"/>
<dbReference type="OMA" id="MATDYYA"/>
<dbReference type="OrthoDB" id="10256793at2759"/>
<dbReference type="PhylomeDB" id="Q8TA83"/>
<dbReference type="SignaLink" id="Q8TA83"/>
<dbReference type="PRO" id="PR:Q8TA83"/>
<dbReference type="Proteomes" id="UP000001940">
    <property type="component" value="Chromosome III"/>
</dbReference>
<dbReference type="Bgee" id="WBGene00001028">
    <property type="expression patterns" value="Expressed in germ line (C elegans) and 4 other cell types or tissues"/>
</dbReference>
<dbReference type="GO" id="GO:0005739">
    <property type="term" value="C:mitochondrion"/>
    <property type="evidence" value="ECO:0000250"/>
    <property type="project" value="WormBase"/>
</dbReference>
<dbReference type="GO" id="GO:0005524">
    <property type="term" value="F:ATP binding"/>
    <property type="evidence" value="ECO:0007669"/>
    <property type="project" value="InterPro"/>
</dbReference>
<dbReference type="GO" id="GO:0031072">
    <property type="term" value="F:heat shock protein binding"/>
    <property type="evidence" value="ECO:0007669"/>
    <property type="project" value="InterPro"/>
</dbReference>
<dbReference type="GO" id="GO:0051082">
    <property type="term" value="F:unfolded protein binding"/>
    <property type="evidence" value="ECO:0000250"/>
    <property type="project" value="WormBase"/>
</dbReference>
<dbReference type="GO" id="GO:0008270">
    <property type="term" value="F:zinc ion binding"/>
    <property type="evidence" value="ECO:0007669"/>
    <property type="project" value="UniProtKB-KW"/>
</dbReference>
<dbReference type="GO" id="GO:0009792">
    <property type="term" value="P:embryo development ending in birth or egg hatching"/>
    <property type="evidence" value="ECO:0000315"/>
    <property type="project" value="WormBase"/>
</dbReference>
<dbReference type="GO" id="GO:0007005">
    <property type="term" value="P:mitochondrion organization"/>
    <property type="evidence" value="ECO:0000318"/>
    <property type="project" value="GO_Central"/>
</dbReference>
<dbReference type="GO" id="GO:0002119">
    <property type="term" value="P:nematode larval development"/>
    <property type="evidence" value="ECO:0000315"/>
    <property type="project" value="WormBase"/>
</dbReference>
<dbReference type="GO" id="GO:0006457">
    <property type="term" value="P:protein folding"/>
    <property type="evidence" value="ECO:0000250"/>
    <property type="project" value="WormBase"/>
</dbReference>
<dbReference type="GO" id="GO:0009408">
    <property type="term" value="P:response to heat"/>
    <property type="evidence" value="ECO:0007669"/>
    <property type="project" value="InterPro"/>
</dbReference>
<dbReference type="CDD" id="cd06257">
    <property type="entry name" value="DnaJ"/>
    <property type="match status" value="1"/>
</dbReference>
<dbReference type="CDD" id="cd10747">
    <property type="entry name" value="DnaJ_C"/>
    <property type="match status" value="1"/>
</dbReference>
<dbReference type="CDD" id="cd10719">
    <property type="entry name" value="DnaJ_zf"/>
    <property type="match status" value="1"/>
</dbReference>
<dbReference type="FunFam" id="1.10.287.110:FF:000034">
    <property type="entry name" value="Chaperone protein DnaJ"/>
    <property type="match status" value="1"/>
</dbReference>
<dbReference type="FunFam" id="2.60.260.20:FF:000005">
    <property type="entry name" value="Chaperone protein dnaJ 1, mitochondrial"/>
    <property type="match status" value="1"/>
</dbReference>
<dbReference type="FunFam" id="2.10.230.10:FF:000002">
    <property type="entry name" value="Molecular chaperone DnaJ"/>
    <property type="match status" value="1"/>
</dbReference>
<dbReference type="Gene3D" id="1.10.287.110">
    <property type="entry name" value="DnaJ domain"/>
    <property type="match status" value="1"/>
</dbReference>
<dbReference type="Gene3D" id="2.10.230.10">
    <property type="entry name" value="Heat shock protein DnaJ, cysteine-rich domain"/>
    <property type="match status" value="1"/>
</dbReference>
<dbReference type="Gene3D" id="2.60.260.20">
    <property type="entry name" value="Urease metallochaperone UreE, N-terminal domain"/>
    <property type="match status" value="2"/>
</dbReference>
<dbReference type="HAMAP" id="MF_01152">
    <property type="entry name" value="DnaJ"/>
    <property type="match status" value="1"/>
</dbReference>
<dbReference type="InterPro" id="IPR051938">
    <property type="entry name" value="Apopto_cytoskel_mod"/>
</dbReference>
<dbReference type="InterPro" id="IPR012724">
    <property type="entry name" value="DnaJ"/>
</dbReference>
<dbReference type="InterPro" id="IPR002939">
    <property type="entry name" value="DnaJ_C"/>
</dbReference>
<dbReference type="InterPro" id="IPR001623">
    <property type="entry name" value="DnaJ_domain"/>
</dbReference>
<dbReference type="InterPro" id="IPR018253">
    <property type="entry name" value="DnaJ_domain_CS"/>
</dbReference>
<dbReference type="InterPro" id="IPR008971">
    <property type="entry name" value="HSP40/DnaJ_pept-bd"/>
</dbReference>
<dbReference type="InterPro" id="IPR001305">
    <property type="entry name" value="HSP_DnaJ_Cys-rich_dom"/>
</dbReference>
<dbReference type="InterPro" id="IPR036410">
    <property type="entry name" value="HSP_DnaJ_Cys-rich_dom_sf"/>
</dbReference>
<dbReference type="InterPro" id="IPR036869">
    <property type="entry name" value="J_dom_sf"/>
</dbReference>
<dbReference type="PANTHER" id="PTHR44145">
    <property type="entry name" value="DNAJ HOMOLOG SUBFAMILY A MEMBER 3, MITOCHONDRIAL"/>
    <property type="match status" value="1"/>
</dbReference>
<dbReference type="PANTHER" id="PTHR44145:SF3">
    <property type="entry name" value="DNAJ HOMOLOG SUBFAMILY A MEMBER 3, MITOCHONDRIAL"/>
    <property type="match status" value="1"/>
</dbReference>
<dbReference type="Pfam" id="PF00226">
    <property type="entry name" value="DnaJ"/>
    <property type="match status" value="1"/>
</dbReference>
<dbReference type="Pfam" id="PF01556">
    <property type="entry name" value="DnaJ_C"/>
    <property type="match status" value="1"/>
</dbReference>
<dbReference type="Pfam" id="PF00684">
    <property type="entry name" value="DnaJ_CXXCXGXG"/>
    <property type="match status" value="1"/>
</dbReference>
<dbReference type="PRINTS" id="PR00625">
    <property type="entry name" value="JDOMAIN"/>
</dbReference>
<dbReference type="SMART" id="SM00271">
    <property type="entry name" value="DnaJ"/>
    <property type="match status" value="1"/>
</dbReference>
<dbReference type="SUPFAM" id="SSF46565">
    <property type="entry name" value="Chaperone J-domain"/>
    <property type="match status" value="1"/>
</dbReference>
<dbReference type="SUPFAM" id="SSF57938">
    <property type="entry name" value="DnaJ/Hsp40 cysteine-rich domain"/>
    <property type="match status" value="1"/>
</dbReference>
<dbReference type="SUPFAM" id="SSF49493">
    <property type="entry name" value="HSP40/DnaJ peptide-binding domain"/>
    <property type="match status" value="2"/>
</dbReference>
<dbReference type="PROSITE" id="PS00636">
    <property type="entry name" value="DNAJ_1"/>
    <property type="match status" value="1"/>
</dbReference>
<dbReference type="PROSITE" id="PS50076">
    <property type="entry name" value="DNAJ_2"/>
    <property type="match status" value="1"/>
</dbReference>
<dbReference type="PROSITE" id="PS51188">
    <property type="entry name" value="ZF_CR"/>
    <property type="match status" value="1"/>
</dbReference>
<evidence type="ECO:0000255" key="1"/>
<evidence type="ECO:0000256" key="2">
    <source>
        <dbReference type="SAM" id="MobiDB-lite"/>
    </source>
</evidence>
<evidence type="ECO:0000303" key="3">
    <source>
    </source>
</evidence>
<proteinExistence type="inferred from homology"/>
<gene>
    <name type="primary">dnj-10</name>
    <name type="ORF">F22B7.5</name>
</gene>
<accession>Q8TA83</accession>
<accession>P34408</accession>
<accession>Q95QJ6</accession>
<protein>
    <recommendedName>
        <fullName>DnaJ homolog dnj-10</fullName>
    </recommendedName>
    <alternativeName>
        <fullName>DnaJ domain protein 10</fullName>
    </alternativeName>
</protein>
<comment type="alternative products">
    <event type="alternative splicing"/>
    <isoform>
        <id>Q8TA83-1</id>
        <name evidence="3">a</name>
        <sequence type="displayed"/>
    </isoform>
    <isoform>
        <id>Q8TA83-2</id>
        <name evidence="3">b</name>
        <sequence type="described" ref="VSP_051736"/>
    </isoform>
</comment>
<feature type="chain" id="PRO_0000071136" description="DnaJ homolog dnj-10">
    <location>
        <begin position="1"/>
        <end position="456"/>
    </location>
</feature>
<feature type="domain" description="J" evidence="1">
    <location>
        <begin position="44"/>
        <end position="108"/>
    </location>
</feature>
<feature type="repeat" description="CXXCXGXG motif">
    <location>
        <begin position="208"/>
        <end position="215"/>
    </location>
</feature>
<feature type="repeat" description="CXXCXGXG motif">
    <location>
        <begin position="231"/>
        <end position="238"/>
    </location>
</feature>
<feature type="repeat" description="CXXCXGXG motif">
    <location>
        <begin position="245"/>
        <end position="252"/>
    </location>
</feature>
<feature type="zinc finger region" description="CR-type">
    <location>
        <begin position="178"/>
        <end position="257"/>
    </location>
</feature>
<feature type="region of interest" description="Disordered" evidence="2">
    <location>
        <begin position="395"/>
        <end position="443"/>
    </location>
</feature>
<feature type="compositionally biased region" description="Basic and acidic residues" evidence="2">
    <location>
        <begin position="395"/>
        <end position="429"/>
    </location>
</feature>
<feature type="splice variant" id="VSP_051736" description="In isoform b." evidence="3">
    <original>GASESQKRRSEPVAENAETIDENQENEGFFEKIKRKIFG</original>
    <variation>DKSEEKSESKEEPKNEESSETPEKKAAES</variation>
    <location>
        <begin position="418"/>
        <end position="456"/>
    </location>
</feature>